<gene>
    <name evidence="1" type="primary">gloB</name>
    <name type="ordered locus">Xfasm12_1364</name>
</gene>
<evidence type="ECO:0000255" key="1">
    <source>
        <dbReference type="HAMAP-Rule" id="MF_01374"/>
    </source>
</evidence>
<organism>
    <name type="scientific">Xylella fastidiosa (strain M12)</name>
    <dbReference type="NCBI Taxonomy" id="405440"/>
    <lineage>
        <taxon>Bacteria</taxon>
        <taxon>Pseudomonadati</taxon>
        <taxon>Pseudomonadota</taxon>
        <taxon>Gammaproteobacteria</taxon>
        <taxon>Lysobacterales</taxon>
        <taxon>Lysobacteraceae</taxon>
        <taxon>Xylella</taxon>
    </lineage>
</organism>
<keyword id="KW-0378">Hydrolase</keyword>
<keyword id="KW-0479">Metal-binding</keyword>
<keyword id="KW-0862">Zinc</keyword>
<dbReference type="EC" id="3.1.2.6" evidence="1"/>
<dbReference type="EMBL" id="CP000941">
    <property type="protein sequence ID" value="ACA12294.1"/>
    <property type="molecule type" value="Genomic_DNA"/>
</dbReference>
<dbReference type="RefSeq" id="WP_012337923.1">
    <property type="nucleotide sequence ID" value="NC_010513.1"/>
</dbReference>
<dbReference type="SMR" id="B0U365"/>
<dbReference type="KEGG" id="xfm:Xfasm12_1364"/>
<dbReference type="HOGENOM" id="CLU_030571_4_1_6"/>
<dbReference type="UniPathway" id="UPA00619">
    <property type="reaction ID" value="UER00676"/>
</dbReference>
<dbReference type="GO" id="GO:0004416">
    <property type="term" value="F:hydroxyacylglutathione hydrolase activity"/>
    <property type="evidence" value="ECO:0007669"/>
    <property type="project" value="UniProtKB-UniRule"/>
</dbReference>
<dbReference type="GO" id="GO:0046872">
    <property type="term" value="F:metal ion binding"/>
    <property type="evidence" value="ECO:0007669"/>
    <property type="project" value="UniProtKB-KW"/>
</dbReference>
<dbReference type="GO" id="GO:0019243">
    <property type="term" value="P:methylglyoxal catabolic process to D-lactate via S-lactoyl-glutathione"/>
    <property type="evidence" value="ECO:0007669"/>
    <property type="project" value="InterPro"/>
</dbReference>
<dbReference type="CDD" id="cd07723">
    <property type="entry name" value="hydroxyacylglutathione_hydrolase_MBL-fold"/>
    <property type="match status" value="1"/>
</dbReference>
<dbReference type="Gene3D" id="3.60.15.10">
    <property type="entry name" value="Ribonuclease Z/Hydroxyacylglutathione hydrolase-like"/>
    <property type="match status" value="1"/>
</dbReference>
<dbReference type="HAMAP" id="MF_01374">
    <property type="entry name" value="Glyoxalase_2"/>
    <property type="match status" value="1"/>
</dbReference>
<dbReference type="InterPro" id="IPR035680">
    <property type="entry name" value="Clx_II_MBL"/>
</dbReference>
<dbReference type="InterPro" id="IPR050110">
    <property type="entry name" value="Glyoxalase_II_hydrolase"/>
</dbReference>
<dbReference type="InterPro" id="IPR032282">
    <property type="entry name" value="HAGH_C"/>
</dbReference>
<dbReference type="InterPro" id="IPR017782">
    <property type="entry name" value="Hydroxyacylglutathione_Hdrlase"/>
</dbReference>
<dbReference type="InterPro" id="IPR001279">
    <property type="entry name" value="Metallo-B-lactamas"/>
</dbReference>
<dbReference type="InterPro" id="IPR036866">
    <property type="entry name" value="RibonucZ/Hydroxyglut_hydro"/>
</dbReference>
<dbReference type="NCBIfam" id="TIGR03413">
    <property type="entry name" value="GSH_gloB"/>
    <property type="match status" value="1"/>
</dbReference>
<dbReference type="PANTHER" id="PTHR43705">
    <property type="entry name" value="HYDROXYACYLGLUTATHIONE HYDROLASE"/>
    <property type="match status" value="1"/>
</dbReference>
<dbReference type="PANTHER" id="PTHR43705:SF1">
    <property type="entry name" value="HYDROXYACYLGLUTATHIONE HYDROLASE GLOB"/>
    <property type="match status" value="1"/>
</dbReference>
<dbReference type="Pfam" id="PF16123">
    <property type="entry name" value="HAGH_C"/>
    <property type="match status" value="1"/>
</dbReference>
<dbReference type="Pfam" id="PF00753">
    <property type="entry name" value="Lactamase_B"/>
    <property type="match status" value="1"/>
</dbReference>
<dbReference type="PIRSF" id="PIRSF005457">
    <property type="entry name" value="Glx"/>
    <property type="match status" value="1"/>
</dbReference>
<dbReference type="SMART" id="SM00849">
    <property type="entry name" value="Lactamase_B"/>
    <property type="match status" value="1"/>
</dbReference>
<dbReference type="SUPFAM" id="SSF56281">
    <property type="entry name" value="Metallo-hydrolase/oxidoreductase"/>
    <property type="match status" value="1"/>
</dbReference>
<proteinExistence type="inferred from homology"/>
<sequence>MRLTPLPAFDNNYIWTLIAPDGRAIIVDPGQALPILEAHSKGLIPTAILLTHHHADHIGGVPELLERWPTLPVYAPHDTRIALNYHRIGEGDSLNILGLRFQVIHTPGHTHSHLTFIGNDLLFCGDTLFSLGCGQIFEGTPTQMLASLQRLAALPIQTRVCCGHEYTLSNAAFALHVDPTNTALQKRRQQANAMRLAGLPTLPISLESELNTNPFLRTAAPTIHAATATHLQRTPIDEVEVFATLRHWKNNFPIKNIP</sequence>
<name>GLO2_XYLFM</name>
<reference key="1">
    <citation type="journal article" date="2010" name="J. Bacteriol.">
        <title>Whole genome sequences of two Xylella fastidiosa strains (M12 and M23) causing almond leaf scorch disease in California.</title>
        <authorList>
            <person name="Chen J."/>
            <person name="Xie G."/>
            <person name="Han S."/>
            <person name="Chertkov O."/>
            <person name="Sims D."/>
            <person name="Civerolo E.L."/>
        </authorList>
    </citation>
    <scope>NUCLEOTIDE SEQUENCE [LARGE SCALE GENOMIC DNA]</scope>
    <source>
        <strain>M12</strain>
    </source>
</reference>
<accession>B0U365</accession>
<comment type="function">
    <text evidence="1">Thiolesterase that catalyzes the hydrolysis of S-D-lactoyl-glutathione to form glutathione and D-lactic acid.</text>
</comment>
<comment type="catalytic activity">
    <reaction evidence="1">
        <text>an S-(2-hydroxyacyl)glutathione + H2O = a 2-hydroxy carboxylate + glutathione + H(+)</text>
        <dbReference type="Rhea" id="RHEA:21864"/>
        <dbReference type="ChEBI" id="CHEBI:15377"/>
        <dbReference type="ChEBI" id="CHEBI:15378"/>
        <dbReference type="ChEBI" id="CHEBI:57925"/>
        <dbReference type="ChEBI" id="CHEBI:58896"/>
        <dbReference type="ChEBI" id="CHEBI:71261"/>
        <dbReference type="EC" id="3.1.2.6"/>
    </reaction>
</comment>
<comment type="cofactor">
    <cofactor evidence="1">
        <name>Zn(2+)</name>
        <dbReference type="ChEBI" id="CHEBI:29105"/>
    </cofactor>
    <text evidence="1">Binds 2 Zn(2+) ions per subunit.</text>
</comment>
<comment type="pathway">
    <text evidence="1">Secondary metabolite metabolism; methylglyoxal degradation; (R)-lactate from methylglyoxal: step 2/2.</text>
</comment>
<comment type="subunit">
    <text evidence="1">Monomer.</text>
</comment>
<comment type="similarity">
    <text evidence="1">Belongs to the metallo-beta-lactamase superfamily. Glyoxalase II family.</text>
</comment>
<feature type="chain" id="PRO_1000144822" description="Hydroxyacylglutathione hydrolase">
    <location>
        <begin position="1"/>
        <end position="258"/>
    </location>
</feature>
<feature type="binding site" evidence="1">
    <location>
        <position position="52"/>
    </location>
    <ligand>
        <name>Zn(2+)</name>
        <dbReference type="ChEBI" id="CHEBI:29105"/>
        <label>1</label>
    </ligand>
</feature>
<feature type="binding site" evidence="1">
    <location>
        <position position="54"/>
    </location>
    <ligand>
        <name>Zn(2+)</name>
        <dbReference type="ChEBI" id="CHEBI:29105"/>
        <label>1</label>
    </ligand>
</feature>
<feature type="binding site" evidence="1">
    <location>
        <position position="56"/>
    </location>
    <ligand>
        <name>Zn(2+)</name>
        <dbReference type="ChEBI" id="CHEBI:29105"/>
        <label>2</label>
    </ligand>
</feature>
<feature type="binding site" evidence="1">
    <location>
        <position position="57"/>
    </location>
    <ligand>
        <name>Zn(2+)</name>
        <dbReference type="ChEBI" id="CHEBI:29105"/>
        <label>2</label>
    </ligand>
</feature>
<feature type="binding site" evidence="1">
    <location>
        <position position="109"/>
    </location>
    <ligand>
        <name>Zn(2+)</name>
        <dbReference type="ChEBI" id="CHEBI:29105"/>
        <label>1</label>
    </ligand>
</feature>
<feature type="binding site" evidence="1">
    <location>
        <position position="126"/>
    </location>
    <ligand>
        <name>Zn(2+)</name>
        <dbReference type="ChEBI" id="CHEBI:29105"/>
        <label>1</label>
    </ligand>
</feature>
<feature type="binding site" evidence="1">
    <location>
        <position position="126"/>
    </location>
    <ligand>
        <name>Zn(2+)</name>
        <dbReference type="ChEBI" id="CHEBI:29105"/>
        <label>2</label>
    </ligand>
</feature>
<feature type="binding site" evidence="1">
    <location>
        <position position="164"/>
    </location>
    <ligand>
        <name>Zn(2+)</name>
        <dbReference type="ChEBI" id="CHEBI:29105"/>
        <label>2</label>
    </ligand>
</feature>
<protein>
    <recommendedName>
        <fullName evidence="1">Hydroxyacylglutathione hydrolase</fullName>
        <ecNumber evidence="1">3.1.2.6</ecNumber>
    </recommendedName>
    <alternativeName>
        <fullName evidence="1">Glyoxalase II</fullName>
        <shortName evidence="1">Glx II</shortName>
    </alternativeName>
</protein>